<protein>
    <recommendedName>
        <fullName evidence="1">Large-conductance mechanosensitive channel</fullName>
    </recommendedName>
</protein>
<dbReference type="EMBL" id="CP000529">
    <property type="protein sequence ID" value="ABM36031.1"/>
    <property type="molecule type" value="Genomic_DNA"/>
</dbReference>
<dbReference type="RefSeq" id="WP_011800126.1">
    <property type="nucleotide sequence ID" value="NC_008781.1"/>
</dbReference>
<dbReference type="SMR" id="A1VK53"/>
<dbReference type="STRING" id="365044.Pnap_0712"/>
<dbReference type="KEGG" id="pna:Pnap_0712"/>
<dbReference type="eggNOG" id="COG1970">
    <property type="taxonomic scope" value="Bacteria"/>
</dbReference>
<dbReference type="HOGENOM" id="CLU_095787_0_1_4"/>
<dbReference type="OrthoDB" id="9810350at2"/>
<dbReference type="Proteomes" id="UP000000644">
    <property type="component" value="Chromosome"/>
</dbReference>
<dbReference type="GO" id="GO:0005886">
    <property type="term" value="C:plasma membrane"/>
    <property type="evidence" value="ECO:0007669"/>
    <property type="project" value="UniProtKB-SubCell"/>
</dbReference>
<dbReference type="GO" id="GO:0008381">
    <property type="term" value="F:mechanosensitive monoatomic ion channel activity"/>
    <property type="evidence" value="ECO:0007669"/>
    <property type="project" value="UniProtKB-UniRule"/>
</dbReference>
<dbReference type="Gene3D" id="1.10.1200.120">
    <property type="entry name" value="Large-conductance mechanosensitive channel, MscL, domain 1"/>
    <property type="match status" value="1"/>
</dbReference>
<dbReference type="HAMAP" id="MF_00115">
    <property type="entry name" value="MscL"/>
    <property type="match status" value="1"/>
</dbReference>
<dbReference type="InterPro" id="IPR019823">
    <property type="entry name" value="Mechanosensitive_channel_CS"/>
</dbReference>
<dbReference type="InterPro" id="IPR001185">
    <property type="entry name" value="MS_channel"/>
</dbReference>
<dbReference type="InterPro" id="IPR037673">
    <property type="entry name" value="MSC/AndL"/>
</dbReference>
<dbReference type="InterPro" id="IPR036019">
    <property type="entry name" value="MscL_channel"/>
</dbReference>
<dbReference type="NCBIfam" id="TIGR00220">
    <property type="entry name" value="mscL"/>
    <property type="match status" value="1"/>
</dbReference>
<dbReference type="NCBIfam" id="NF001843">
    <property type="entry name" value="PRK00567.1-4"/>
    <property type="match status" value="1"/>
</dbReference>
<dbReference type="NCBIfam" id="NF010557">
    <property type="entry name" value="PRK13952.1"/>
    <property type="match status" value="1"/>
</dbReference>
<dbReference type="PANTHER" id="PTHR30266:SF2">
    <property type="entry name" value="LARGE-CONDUCTANCE MECHANOSENSITIVE CHANNEL"/>
    <property type="match status" value="1"/>
</dbReference>
<dbReference type="PANTHER" id="PTHR30266">
    <property type="entry name" value="MECHANOSENSITIVE CHANNEL MSCL"/>
    <property type="match status" value="1"/>
</dbReference>
<dbReference type="Pfam" id="PF01741">
    <property type="entry name" value="MscL"/>
    <property type="match status" value="1"/>
</dbReference>
<dbReference type="PRINTS" id="PR01264">
    <property type="entry name" value="MECHCHANNEL"/>
</dbReference>
<dbReference type="SUPFAM" id="SSF81330">
    <property type="entry name" value="Gated mechanosensitive channel"/>
    <property type="match status" value="1"/>
</dbReference>
<dbReference type="PROSITE" id="PS01327">
    <property type="entry name" value="MSCL"/>
    <property type="match status" value="1"/>
</dbReference>
<name>MSCL_POLNA</name>
<feature type="chain" id="PRO_1000015408" description="Large-conductance mechanosensitive channel">
    <location>
        <begin position="1"/>
        <end position="142"/>
    </location>
</feature>
<feature type="transmembrane region" description="Helical" evidence="1">
    <location>
        <begin position="10"/>
        <end position="30"/>
    </location>
</feature>
<feature type="transmembrane region" description="Helical" evidence="1">
    <location>
        <begin position="86"/>
        <end position="106"/>
    </location>
</feature>
<organism>
    <name type="scientific">Polaromonas naphthalenivorans (strain CJ2)</name>
    <dbReference type="NCBI Taxonomy" id="365044"/>
    <lineage>
        <taxon>Bacteria</taxon>
        <taxon>Pseudomonadati</taxon>
        <taxon>Pseudomonadota</taxon>
        <taxon>Betaproteobacteria</taxon>
        <taxon>Burkholderiales</taxon>
        <taxon>Comamonadaceae</taxon>
        <taxon>Polaromonas</taxon>
    </lineage>
</organism>
<reference key="1">
    <citation type="journal article" date="2009" name="Environ. Microbiol.">
        <title>The genome of Polaromonas naphthalenivorans strain CJ2, isolated from coal tar-contaminated sediment, reveals physiological and metabolic versatility and evolution through extensive horizontal gene transfer.</title>
        <authorList>
            <person name="Yagi J.M."/>
            <person name="Sims D."/>
            <person name="Brettin T."/>
            <person name="Bruce D."/>
            <person name="Madsen E.L."/>
        </authorList>
    </citation>
    <scope>NUCLEOTIDE SEQUENCE [LARGE SCALE GENOMIC DNA]</scope>
    <source>
        <strain>CJ2</strain>
    </source>
</reference>
<keyword id="KW-0997">Cell inner membrane</keyword>
<keyword id="KW-1003">Cell membrane</keyword>
<keyword id="KW-0407">Ion channel</keyword>
<keyword id="KW-0406">Ion transport</keyword>
<keyword id="KW-0472">Membrane</keyword>
<keyword id="KW-1185">Reference proteome</keyword>
<keyword id="KW-0812">Transmembrane</keyword>
<keyword id="KW-1133">Transmembrane helix</keyword>
<keyword id="KW-0813">Transport</keyword>
<accession>A1VK53</accession>
<gene>
    <name evidence="1" type="primary">mscL</name>
    <name type="ordered locus">Pnap_0712</name>
</gene>
<evidence type="ECO:0000255" key="1">
    <source>
        <dbReference type="HAMAP-Rule" id="MF_00115"/>
    </source>
</evidence>
<sequence length="142" mass="15450">MGMMQEFKEFAIKGNVIDLAVGVIIGAAFSKIVDSVVGDLIMPVVGAVIGKLDFSNMFVVLRSVPPGIPTTLDALKKAGVPVFAYGNFITVAVNFAILAFIIFLMVKQINRLKRREVVKPTTAPAEDIMLLREIRDSLKKQA</sequence>
<proteinExistence type="inferred from homology"/>
<comment type="function">
    <text evidence="1">Channel that opens in response to stretch forces in the membrane lipid bilayer. May participate in the regulation of osmotic pressure changes within the cell.</text>
</comment>
<comment type="subunit">
    <text evidence="1">Homopentamer.</text>
</comment>
<comment type="subcellular location">
    <subcellularLocation>
        <location evidence="1">Cell inner membrane</location>
        <topology evidence="1">Multi-pass membrane protein</topology>
    </subcellularLocation>
</comment>
<comment type="similarity">
    <text evidence="1">Belongs to the MscL family.</text>
</comment>